<sequence>MTEVRSCFSSALRRRQCASTSAAVSATSSPKTCGCRCTSFVTSVPATSSIANGSSASSWAIRAWKTTWSRTSPNSSRSSPRSPASMASTSSYISSTPYLTRSWWVRRALHGHARRIRSMTSTTSSRRAPGRS</sequence>
<evidence type="ECO:0000256" key="1">
    <source>
        <dbReference type="SAM" id="MobiDB-lite"/>
    </source>
</evidence>
<reference key="1">
    <citation type="journal article" date="1992" name="J. Bacteriol.">
        <title>Nucleotide sequence and transcriptional analysis of activator-regulator proteins for beta-lactamase in Streptomyces cacaoi.</title>
        <authorList>
            <person name="Urabe H."/>
            <person name="Ogawara H."/>
        </authorList>
    </citation>
    <scope>NUCLEOTIDE SEQUENCE [GENOMIC DNA]</scope>
    <source>
        <strain>ATCC 3082 / DSM 40057 / JCM 4352 / BCRC 12103 / KCC S-0352 / LMG 19320 / NBRC 12748 / NCIMB 9626 / IMRU 3082</strain>
    </source>
</reference>
<proteinExistence type="predicted"/>
<name>YBL2_STRCI</name>
<feature type="chain" id="PRO_0000066147" description="Uncharacterized 14.2 kDa protein in blaB 3'region">
    <location>
        <begin position="1"/>
        <end position="132"/>
    </location>
</feature>
<feature type="region of interest" description="Disordered" evidence="1">
    <location>
        <begin position="68"/>
        <end position="91"/>
    </location>
</feature>
<accession>P33654</accession>
<protein>
    <recommendedName>
        <fullName>Uncharacterized 14.2 kDa protein in blaB 3'region</fullName>
    </recommendedName>
</protein>
<organism>
    <name type="scientific">Streptomyces cacaoi</name>
    <dbReference type="NCBI Taxonomy" id="1898"/>
    <lineage>
        <taxon>Bacteria</taxon>
        <taxon>Bacillati</taxon>
        <taxon>Actinomycetota</taxon>
        <taxon>Actinomycetes</taxon>
        <taxon>Kitasatosporales</taxon>
        <taxon>Streptomycetaceae</taxon>
        <taxon>Streptomyces</taxon>
    </lineage>
</organism>
<dbReference type="EMBL" id="D00937">
    <property type="protein sequence ID" value="BAA00776.1"/>
    <property type="molecule type" value="Genomic_DNA"/>
</dbReference>
<dbReference type="PIR" id="C41855">
    <property type="entry name" value="C41855"/>
</dbReference>